<evidence type="ECO:0000250" key="1"/>
<evidence type="ECO:0000305" key="2"/>
<dbReference type="EMBL" id="BA000004">
    <property type="protein sequence ID" value="BAB06741.1"/>
    <property type="molecule type" value="Genomic_DNA"/>
</dbReference>
<dbReference type="PIR" id="F84027">
    <property type="entry name" value="F84027"/>
</dbReference>
<dbReference type="RefSeq" id="WP_010899166.1">
    <property type="nucleotide sequence ID" value="NC_002570.2"/>
</dbReference>
<dbReference type="SMR" id="Q9K8I4"/>
<dbReference type="STRING" id="272558.gene:10728932"/>
<dbReference type="GeneID" id="87598543"/>
<dbReference type="KEGG" id="bha:BH3022"/>
<dbReference type="eggNOG" id="COG0521">
    <property type="taxonomic scope" value="Bacteria"/>
</dbReference>
<dbReference type="HOGENOM" id="CLU_077358_2_3_9"/>
<dbReference type="OrthoDB" id="9784492at2"/>
<dbReference type="UniPathway" id="UPA00344"/>
<dbReference type="Proteomes" id="UP000001258">
    <property type="component" value="Chromosome"/>
</dbReference>
<dbReference type="GO" id="GO:0005829">
    <property type="term" value="C:cytosol"/>
    <property type="evidence" value="ECO:0007669"/>
    <property type="project" value="TreeGrafter"/>
</dbReference>
<dbReference type="GO" id="GO:0006777">
    <property type="term" value="P:Mo-molybdopterin cofactor biosynthetic process"/>
    <property type="evidence" value="ECO:0007669"/>
    <property type="project" value="UniProtKB-KW"/>
</dbReference>
<dbReference type="CDD" id="cd00886">
    <property type="entry name" value="MogA_MoaB"/>
    <property type="match status" value="1"/>
</dbReference>
<dbReference type="FunFam" id="3.40.980.10:FF:000006">
    <property type="entry name" value="Molybdenum cofactor biosynthesis protein B"/>
    <property type="match status" value="1"/>
</dbReference>
<dbReference type="Gene3D" id="3.40.980.10">
    <property type="entry name" value="MoaB/Mog-like domain"/>
    <property type="match status" value="1"/>
</dbReference>
<dbReference type="InterPro" id="IPR012245">
    <property type="entry name" value="MoaB"/>
</dbReference>
<dbReference type="InterPro" id="IPR036425">
    <property type="entry name" value="MoaB/Mog-like_dom_sf"/>
</dbReference>
<dbReference type="InterPro" id="IPR001453">
    <property type="entry name" value="MoaB/Mog_dom"/>
</dbReference>
<dbReference type="InterPro" id="IPR008284">
    <property type="entry name" value="MoCF_biosynth_CS"/>
</dbReference>
<dbReference type="NCBIfam" id="TIGR00177">
    <property type="entry name" value="molyb_syn"/>
    <property type="match status" value="1"/>
</dbReference>
<dbReference type="PANTHER" id="PTHR43232">
    <property type="entry name" value="MOLYBDENUM COFACTOR BIOSYNTHESIS PROTEIN B"/>
    <property type="match status" value="1"/>
</dbReference>
<dbReference type="PANTHER" id="PTHR43232:SF2">
    <property type="entry name" value="MOLYBDENUM COFACTOR BIOSYNTHESIS PROTEIN B"/>
    <property type="match status" value="1"/>
</dbReference>
<dbReference type="Pfam" id="PF00994">
    <property type="entry name" value="MoCF_biosynth"/>
    <property type="match status" value="1"/>
</dbReference>
<dbReference type="PIRSF" id="PIRSF006443">
    <property type="entry name" value="MoaB"/>
    <property type="match status" value="1"/>
</dbReference>
<dbReference type="SMART" id="SM00852">
    <property type="entry name" value="MoCF_biosynth"/>
    <property type="match status" value="1"/>
</dbReference>
<dbReference type="SUPFAM" id="SSF53218">
    <property type="entry name" value="Molybdenum cofactor biosynthesis proteins"/>
    <property type="match status" value="1"/>
</dbReference>
<dbReference type="PROSITE" id="PS01078">
    <property type="entry name" value="MOCF_BIOSYNTHESIS_1"/>
    <property type="match status" value="1"/>
</dbReference>
<protein>
    <recommendedName>
        <fullName>Molybdenum cofactor biosynthesis protein B</fullName>
    </recommendedName>
</protein>
<organism>
    <name type="scientific">Halalkalibacterium halodurans (strain ATCC BAA-125 / DSM 18197 / FERM 7344 / JCM 9153 / C-125)</name>
    <name type="common">Bacillus halodurans</name>
    <dbReference type="NCBI Taxonomy" id="272558"/>
    <lineage>
        <taxon>Bacteria</taxon>
        <taxon>Bacillati</taxon>
        <taxon>Bacillota</taxon>
        <taxon>Bacilli</taxon>
        <taxon>Bacillales</taxon>
        <taxon>Bacillaceae</taxon>
        <taxon>Halalkalibacterium (ex Joshi et al. 2022)</taxon>
    </lineage>
</organism>
<reference key="1">
    <citation type="journal article" date="2000" name="Nucleic Acids Res.">
        <title>Complete genome sequence of the alkaliphilic bacterium Bacillus halodurans and genomic sequence comparison with Bacillus subtilis.</title>
        <authorList>
            <person name="Takami H."/>
            <person name="Nakasone K."/>
            <person name="Takaki Y."/>
            <person name="Maeno G."/>
            <person name="Sasaki R."/>
            <person name="Masui N."/>
            <person name="Fuji F."/>
            <person name="Hirama C."/>
            <person name="Nakamura Y."/>
            <person name="Ogasawara N."/>
            <person name="Kuhara S."/>
            <person name="Horikoshi K."/>
        </authorList>
    </citation>
    <scope>NUCLEOTIDE SEQUENCE [LARGE SCALE GENOMIC DNA]</scope>
    <source>
        <strain>ATCC BAA-125 / DSM 18197 / FERM 7344 / JCM 9153 / C-125</strain>
    </source>
</reference>
<feature type="chain" id="PRO_0000170968" description="Molybdenum cofactor biosynthesis protein B">
    <location>
        <begin position="1"/>
        <end position="170"/>
    </location>
</feature>
<comment type="function">
    <text evidence="1">May be involved in the biosynthesis of molybdopterin.</text>
</comment>
<comment type="pathway">
    <text>Cofactor biosynthesis; molybdopterin biosynthesis.</text>
</comment>
<comment type="similarity">
    <text evidence="2">Belongs to the MoaB/Mog family.</text>
</comment>
<sequence>MSVEQHRKEAPKTVRCMILTISDTRTYDTDKSGALIRELLEAKGHQVTEYQIVKDEYSQIQHWLKVAAGRADIDAILLNGGTGIALRDTTYEAVRDSLDKEMPGFGEIFRLLSFQEDIGTAAILSRAIAGVRDGKAIFSMPGSTGAVKLAMTRIIIPELGHVMREILKDR</sequence>
<proteinExistence type="inferred from homology"/>
<accession>Q9K8I4</accession>
<name>MOAB_HALH5</name>
<keyword id="KW-0501">Molybdenum cofactor biosynthesis</keyword>
<keyword id="KW-1185">Reference proteome</keyword>
<gene>
    <name type="primary">moaB</name>
    <name type="ordered locus">BH3022</name>
</gene>